<comment type="function">
    <text evidence="1">Catalyzes the dehydration of inosose (2-keto-myo-inositol, 2KMI or 2,4,6/3,5-pentahydroxycyclohexanone) to 3D-(3,5/4)-trihydroxycyclohexane-1,2-dione (D-2,3-diketo-4-deoxy-epi-inositol).</text>
</comment>
<comment type="catalytic activity">
    <reaction evidence="1">
        <text>scyllo-inosose = 3D-3,5/4-trihydroxycyclohexane-1,2-dione + H2O</text>
        <dbReference type="Rhea" id="RHEA:14065"/>
        <dbReference type="ChEBI" id="CHEBI:15377"/>
        <dbReference type="ChEBI" id="CHEBI:17811"/>
        <dbReference type="ChEBI" id="CHEBI:28446"/>
        <dbReference type="EC" id="4.2.1.44"/>
    </reaction>
</comment>
<comment type="cofactor">
    <cofactor evidence="1">
        <name>glutathione</name>
        <dbReference type="ChEBI" id="CHEBI:57925"/>
    </cofactor>
</comment>
<comment type="cofactor">
    <cofactor evidence="1">
        <name>Co(2+)</name>
        <dbReference type="ChEBI" id="CHEBI:48828"/>
    </cofactor>
    <cofactor evidence="1">
        <name>Mn(2+)</name>
        <dbReference type="ChEBI" id="CHEBI:29035"/>
    </cofactor>
</comment>
<comment type="pathway">
    <text evidence="1">Polyol metabolism; myo-inositol degradation into acetyl-CoA; acetyl-CoA from myo-inositol: step 2/7.</text>
</comment>
<comment type="similarity">
    <text evidence="1">Belongs to the IolE/MocC family.</text>
</comment>
<proteinExistence type="inferred from homology"/>
<name>IOLE_BACVZ</name>
<accession>A7ZAH7</accession>
<reference key="1">
    <citation type="journal article" date="2007" name="Nat. Biotechnol.">
        <title>Comparative analysis of the complete genome sequence of the plant growth-promoting bacterium Bacillus amyloliquefaciens FZB42.</title>
        <authorList>
            <person name="Chen X.H."/>
            <person name="Koumoutsi A."/>
            <person name="Scholz R."/>
            <person name="Eisenreich A."/>
            <person name="Schneider K."/>
            <person name="Heinemeyer I."/>
            <person name="Morgenstern B."/>
            <person name="Voss B."/>
            <person name="Hess W.R."/>
            <person name="Reva O."/>
            <person name="Junge H."/>
            <person name="Voigt B."/>
            <person name="Jungblut P.R."/>
            <person name="Vater J."/>
            <person name="Suessmuth R."/>
            <person name="Liesegang H."/>
            <person name="Strittmatter A."/>
            <person name="Gottschalk G."/>
            <person name="Borriss R."/>
        </authorList>
    </citation>
    <scope>NUCLEOTIDE SEQUENCE [LARGE SCALE GENOMIC DNA]</scope>
    <source>
        <strain>DSM 23117 / BGSC 10A6 / LMG 26770 / FZB42</strain>
    </source>
</reference>
<evidence type="ECO:0000255" key="1">
    <source>
        <dbReference type="HAMAP-Rule" id="MF_01672"/>
    </source>
</evidence>
<feature type="chain" id="PRO_0000352352" description="Inosose dehydratase">
    <location>
        <begin position="1"/>
        <end position="298"/>
    </location>
</feature>
<sequence>MGKQDILWGIAPIGWRNDDMPEIGAGNTLQHLLSDIVVAGFQGTEVGGFFPEPSVLNKELALRNLRIAGKWFSSFIIQDGIEKMAEQFTEHCDYLQKVGADVAIVSEQTYSVQGLDIDVFKEKPHFSDEEWDTLCQGLNRLGKIAGEYGLDLTFHHHLGTGVQTAEEVDRLMDGTDPRYVHLLYDTGHAYISDGDYMTILNKHMDRIRHVHFKDARFDIMERCRQEGKSFRQSFLQGIFTVPGDGCIDFTEVYRTLVRHDYSGWIVIEAEQDPAVANPLEYALIARKYIDSELLDPAN</sequence>
<protein>
    <recommendedName>
        <fullName evidence="1">Inosose dehydratase</fullName>
        <ecNumber evidence="1">4.2.1.44</ecNumber>
    </recommendedName>
    <alternativeName>
        <fullName evidence="1">2-keto-myo-inositol dehydratase</fullName>
        <shortName evidence="1">2KMI dehydratase</shortName>
    </alternativeName>
</protein>
<organism>
    <name type="scientific">Bacillus velezensis (strain DSM 23117 / BGSC 10A6 / LMG 26770 / FZB42)</name>
    <name type="common">Bacillus amyloliquefaciens subsp. plantarum</name>
    <dbReference type="NCBI Taxonomy" id="326423"/>
    <lineage>
        <taxon>Bacteria</taxon>
        <taxon>Bacillati</taxon>
        <taxon>Bacillota</taxon>
        <taxon>Bacilli</taxon>
        <taxon>Bacillales</taxon>
        <taxon>Bacillaceae</taxon>
        <taxon>Bacillus</taxon>
        <taxon>Bacillus amyloliquefaciens group</taxon>
    </lineage>
</organism>
<gene>
    <name evidence="1" type="primary">iolE</name>
    <name type="ordered locus">RBAM_036740</name>
</gene>
<keyword id="KW-0170">Cobalt</keyword>
<keyword id="KW-0456">Lyase</keyword>
<keyword id="KW-0464">Manganese</keyword>
<dbReference type="EC" id="4.2.1.44" evidence="1"/>
<dbReference type="EMBL" id="CP000560">
    <property type="protein sequence ID" value="ABS76003.1"/>
    <property type="molecule type" value="Genomic_DNA"/>
</dbReference>
<dbReference type="RefSeq" id="WP_012118844.1">
    <property type="nucleotide sequence ID" value="NC_009725.2"/>
</dbReference>
<dbReference type="SMR" id="A7ZAH7"/>
<dbReference type="GeneID" id="93082813"/>
<dbReference type="KEGG" id="bay:RBAM_036740"/>
<dbReference type="HOGENOM" id="CLU_059523_0_0_9"/>
<dbReference type="UniPathway" id="UPA00076">
    <property type="reaction ID" value="UER00144"/>
</dbReference>
<dbReference type="Proteomes" id="UP000001120">
    <property type="component" value="Chromosome"/>
</dbReference>
<dbReference type="GO" id="GO:0030145">
    <property type="term" value="F:manganese ion binding"/>
    <property type="evidence" value="ECO:0007669"/>
    <property type="project" value="UniProtKB-UniRule"/>
</dbReference>
<dbReference type="GO" id="GO:0050114">
    <property type="term" value="F:myo-inosose-2 dehydratase activity"/>
    <property type="evidence" value="ECO:0007669"/>
    <property type="project" value="UniProtKB-UniRule"/>
</dbReference>
<dbReference type="GO" id="GO:0019310">
    <property type="term" value="P:inositol catabolic process"/>
    <property type="evidence" value="ECO:0007669"/>
    <property type="project" value="UniProtKB-UniRule"/>
</dbReference>
<dbReference type="Gene3D" id="3.20.20.150">
    <property type="entry name" value="Divalent-metal-dependent TIM barrel enzymes"/>
    <property type="match status" value="1"/>
</dbReference>
<dbReference type="HAMAP" id="MF_01672">
    <property type="entry name" value="IolE"/>
    <property type="match status" value="1"/>
</dbReference>
<dbReference type="InterPro" id="IPR023952">
    <property type="entry name" value="IolE"/>
</dbReference>
<dbReference type="InterPro" id="IPR030823">
    <property type="entry name" value="IolE/MocC"/>
</dbReference>
<dbReference type="InterPro" id="IPR050312">
    <property type="entry name" value="IolE/XylAMocC-like"/>
</dbReference>
<dbReference type="InterPro" id="IPR036237">
    <property type="entry name" value="Xyl_isomerase-like_sf"/>
</dbReference>
<dbReference type="InterPro" id="IPR013022">
    <property type="entry name" value="Xyl_isomerase-like_TIM-brl"/>
</dbReference>
<dbReference type="NCBIfam" id="TIGR04379">
    <property type="entry name" value="myo_inos_iolE"/>
    <property type="match status" value="1"/>
</dbReference>
<dbReference type="PANTHER" id="PTHR12110">
    <property type="entry name" value="HYDROXYPYRUVATE ISOMERASE"/>
    <property type="match status" value="1"/>
</dbReference>
<dbReference type="PANTHER" id="PTHR12110:SF41">
    <property type="entry name" value="INOSOSE DEHYDRATASE"/>
    <property type="match status" value="1"/>
</dbReference>
<dbReference type="Pfam" id="PF01261">
    <property type="entry name" value="AP_endonuc_2"/>
    <property type="match status" value="1"/>
</dbReference>
<dbReference type="SUPFAM" id="SSF51658">
    <property type="entry name" value="Xylose isomerase-like"/>
    <property type="match status" value="1"/>
</dbReference>